<dbReference type="EC" id="6.1.1.16" evidence="3"/>
<dbReference type="EMBL" id="AB169694">
    <property type="protein sequence ID" value="BAE01775.1"/>
    <property type="molecule type" value="mRNA"/>
</dbReference>
<dbReference type="SMR" id="Q4R550"/>
<dbReference type="STRING" id="9541.ENSMFAP00000009500"/>
<dbReference type="eggNOG" id="KOG1668">
    <property type="taxonomic scope" value="Eukaryota"/>
</dbReference>
<dbReference type="eggNOG" id="KOG2007">
    <property type="taxonomic scope" value="Eukaryota"/>
</dbReference>
<dbReference type="OrthoDB" id="438179at2759"/>
<dbReference type="Proteomes" id="UP000233100">
    <property type="component" value="Unplaced"/>
</dbReference>
<dbReference type="GO" id="GO:0005737">
    <property type="term" value="C:cytoplasm"/>
    <property type="evidence" value="ECO:0000250"/>
    <property type="project" value="UniProtKB"/>
</dbReference>
<dbReference type="GO" id="GO:0005524">
    <property type="term" value="F:ATP binding"/>
    <property type="evidence" value="ECO:0007669"/>
    <property type="project" value="UniProtKB-KW"/>
</dbReference>
<dbReference type="GO" id="GO:0004817">
    <property type="term" value="F:cysteine-tRNA ligase activity"/>
    <property type="evidence" value="ECO:0000250"/>
    <property type="project" value="UniProtKB"/>
</dbReference>
<dbReference type="GO" id="GO:0046872">
    <property type="term" value="F:metal ion binding"/>
    <property type="evidence" value="ECO:0007669"/>
    <property type="project" value="UniProtKB-KW"/>
</dbReference>
<dbReference type="GO" id="GO:0000049">
    <property type="term" value="F:tRNA binding"/>
    <property type="evidence" value="ECO:0000250"/>
    <property type="project" value="UniProtKB"/>
</dbReference>
<dbReference type="GO" id="GO:0006423">
    <property type="term" value="P:cysteinyl-tRNA aminoacylation"/>
    <property type="evidence" value="ECO:0000250"/>
    <property type="project" value="UniProtKB"/>
</dbReference>
<dbReference type="CDD" id="cd00672">
    <property type="entry name" value="CysRS_core"/>
    <property type="match status" value="1"/>
</dbReference>
<dbReference type="FunFam" id="3.40.50.620:FF:000027">
    <property type="entry name" value="Cysteine--tRNA ligase, cytoplasmic"/>
    <property type="match status" value="1"/>
</dbReference>
<dbReference type="FunFam" id="3.40.50.620:FF:000228">
    <property type="entry name" value="Cysteinyl-tRNA synthetase"/>
    <property type="match status" value="1"/>
</dbReference>
<dbReference type="Gene3D" id="3.40.50.620">
    <property type="entry name" value="HUPs"/>
    <property type="match status" value="1"/>
</dbReference>
<dbReference type="HAMAP" id="MF_00041">
    <property type="entry name" value="Cys_tRNA_synth"/>
    <property type="match status" value="1"/>
</dbReference>
<dbReference type="InterPro" id="IPR015803">
    <property type="entry name" value="Cys-tRNA-ligase"/>
</dbReference>
<dbReference type="InterPro" id="IPR024909">
    <property type="entry name" value="Cys-tRNA/MSH_ligase"/>
</dbReference>
<dbReference type="InterPro" id="IPR014729">
    <property type="entry name" value="Rossmann-like_a/b/a_fold"/>
</dbReference>
<dbReference type="InterPro" id="IPR032678">
    <property type="entry name" value="tRNA-synt_1_cat_dom"/>
</dbReference>
<dbReference type="InterPro" id="IPR009080">
    <property type="entry name" value="tRNAsynth_Ia_anticodon-bd"/>
</dbReference>
<dbReference type="NCBIfam" id="TIGR00435">
    <property type="entry name" value="cysS"/>
    <property type="match status" value="1"/>
</dbReference>
<dbReference type="PANTHER" id="PTHR10890:SF3">
    <property type="entry name" value="CYSTEINE--TRNA LIGASE, CYTOPLASMIC"/>
    <property type="match status" value="1"/>
</dbReference>
<dbReference type="PANTHER" id="PTHR10890">
    <property type="entry name" value="CYSTEINYL-TRNA SYNTHETASE"/>
    <property type="match status" value="1"/>
</dbReference>
<dbReference type="Pfam" id="PF01406">
    <property type="entry name" value="tRNA-synt_1e"/>
    <property type="match status" value="1"/>
</dbReference>
<dbReference type="PRINTS" id="PR00983">
    <property type="entry name" value="TRNASYNTHCYS"/>
</dbReference>
<dbReference type="SUPFAM" id="SSF47323">
    <property type="entry name" value="Anticodon-binding domain of a subclass of class I aminoacyl-tRNA synthetases"/>
    <property type="match status" value="1"/>
</dbReference>
<dbReference type="SUPFAM" id="SSF52374">
    <property type="entry name" value="Nucleotidylyl transferase"/>
    <property type="match status" value="1"/>
</dbReference>
<name>SYCC_MACFA</name>
<organism>
    <name type="scientific">Macaca fascicularis</name>
    <name type="common">Crab-eating macaque</name>
    <name type="synonym">Cynomolgus monkey</name>
    <dbReference type="NCBI Taxonomy" id="9541"/>
    <lineage>
        <taxon>Eukaryota</taxon>
        <taxon>Metazoa</taxon>
        <taxon>Chordata</taxon>
        <taxon>Craniata</taxon>
        <taxon>Vertebrata</taxon>
        <taxon>Euteleostomi</taxon>
        <taxon>Mammalia</taxon>
        <taxon>Eutheria</taxon>
        <taxon>Euarchontoglires</taxon>
        <taxon>Primates</taxon>
        <taxon>Haplorrhini</taxon>
        <taxon>Catarrhini</taxon>
        <taxon>Cercopithecidae</taxon>
        <taxon>Cercopithecinae</taxon>
        <taxon>Macaca</taxon>
    </lineage>
</organism>
<keyword id="KW-0007">Acetylation</keyword>
<keyword id="KW-0030">Aminoacyl-tRNA synthetase</keyword>
<keyword id="KW-0067">ATP-binding</keyword>
<keyword id="KW-0963">Cytoplasm</keyword>
<keyword id="KW-0436">Ligase</keyword>
<keyword id="KW-0479">Metal-binding</keyword>
<keyword id="KW-0547">Nucleotide-binding</keyword>
<keyword id="KW-0597">Phosphoprotein</keyword>
<keyword id="KW-0648">Protein biosynthesis</keyword>
<keyword id="KW-1185">Reference proteome</keyword>
<keyword id="KW-0862">Zinc</keyword>
<feature type="initiator methionine" description="Removed" evidence="3">
    <location>
        <position position="1"/>
    </location>
</feature>
<feature type="chain" id="PRO_0000250744" description="Cysteine--tRNA ligase, cytoplasmic">
    <location>
        <begin position="2"/>
        <end position="748"/>
    </location>
</feature>
<feature type="region of interest" description="Disordered" evidence="4">
    <location>
        <begin position="1"/>
        <end position="25"/>
    </location>
</feature>
<feature type="region of interest" description="Disordered" evidence="4">
    <location>
        <begin position="654"/>
        <end position="686"/>
    </location>
</feature>
<feature type="region of interest" description="Disordered" evidence="4">
    <location>
        <begin position="700"/>
        <end position="721"/>
    </location>
</feature>
<feature type="short sequence motif" description="'HIGH' region">
    <location>
        <begin position="57"/>
        <end position="67"/>
    </location>
</feature>
<feature type="short sequence motif" description="'KIIK' region">
    <location>
        <begin position="101"/>
        <end position="104"/>
    </location>
</feature>
<feature type="short sequence motif" description="'KMSKS' region">
    <location>
        <begin position="406"/>
        <end position="410"/>
    </location>
</feature>
<feature type="compositionally biased region" description="Basic and acidic residues" evidence="4">
    <location>
        <begin position="654"/>
        <end position="679"/>
    </location>
</feature>
<feature type="compositionally biased region" description="Basic and acidic residues" evidence="4">
    <location>
        <begin position="700"/>
        <end position="717"/>
    </location>
</feature>
<feature type="binding site" evidence="2">
    <location>
        <position position="55"/>
    </location>
    <ligand>
        <name>Zn(2+)</name>
        <dbReference type="ChEBI" id="CHEBI:29105"/>
    </ligand>
</feature>
<feature type="binding site" evidence="2">
    <location>
        <position position="56"/>
    </location>
    <ligand>
        <name>L-cysteine</name>
        <dbReference type="ChEBI" id="CHEBI:35235"/>
    </ligand>
</feature>
<feature type="binding site" evidence="2">
    <location>
        <position position="96"/>
    </location>
    <ligand>
        <name>L-cysteine</name>
        <dbReference type="ChEBI" id="CHEBI:35235"/>
    </ligand>
</feature>
<feature type="binding site" evidence="2">
    <location>
        <position position="348"/>
    </location>
    <ligand>
        <name>Zn(2+)</name>
        <dbReference type="ChEBI" id="CHEBI:29105"/>
    </ligand>
</feature>
<feature type="binding site" evidence="2">
    <location>
        <position position="373"/>
    </location>
    <ligand>
        <name>L-cysteine</name>
        <dbReference type="ChEBI" id="CHEBI:35235"/>
    </ligand>
</feature>
<feature type="binding site" evidence="2">
    <location>
        <position position="373"/>
    </location>
    <ligand>
        <name>Zn(2+)</name>
        <dbReference type="ChEBI" id="CHEBI:29105"/>
    </ligand>
</feature>
<feature type="binding site" evidence="2">
    <location>
        <position position="377"/>
    </location>
    <ligand>
        <name>Zn(2+)</name>
        <dbReference type="ChEBI" id="CHEBI:29105"/>
    </ligand>
</feature>
<feature type="binding site" evidence="1">
    <location>
        <position position="409"/>
    </location>
    <ligand>
        <name>ATP</name>
        <dbReference type="ChEBI" id="CHEBI:30616"/>
    </ligand>
</feature>
<feature type="modified residue" description="N-acetylalanine" evidence="3">
    <location>
        <position position="2"/>
    </location>
</feature>
<feature type="modified residue" description="Phosphoserine" evidence="3">
    <location>
        <position position="19"/>
    </location>
</feature>
<feature type="modified residue" description="Phosphoserine" evidence="3">
    <location>
        <position position="305"/>
    </location>
</feature>
<feature type="modified residue" description="Phosphoserine" evidence="3">
    <location>
        <position position="307"/>
    </location>
</feature>
<feature type="modified residue" description="Phosphoserine" evidence="3">
    <location>
        <position position="746"/>
    </location>
</feature>
<evidence type="ECO:0000250" key="1"/>
<evidence type="ECO:0000250" key="2">
    <source>
        <dbReference type="UniProtKB" id="P21888"/>
    </source>
</evidence>
<evidence type="ECO:0000250" key="3">
    <source>
        <dbReference type="UniProtKB" id="P49589"/>
    </source>
</evidence>
<evidence type="ECO:0000256" key="4">
    <source>
        <dbReference type="SAM" id="MobiDB-lite"/>
    </source>
</evidence>
<gene>
    <name type="primary">CARS1</name>
    <name type="synonym">CARS</name>
    <name type="ORF">QccE-19031</name>
</gene>
<proteinExistence type="evidence at transcript level"/>
<reference key="1">
    <citation type="submission" date="2005-06" db="EMBL/GenBank/DDBJ databases">
        <title>DNA sequences of macaque genes expressed in brain or testis and its evolutionary implications.</title>
        <authorList>
            <consortium name="International consortium for macaque cDNA sequencing and analysis"/>
        </authorList>
    </citation>
    <scope>NUCLEOTIDE SEQUENCE [LARGE SCALE MRNA]</scope>
    <source>
        <tissue>Brain cortex</tissue>
    </source>
</reference>
<accession>Q4R550</accession>
<comment type="function">
    <text evidence="3">Catalyzes the ATP-dependent ligation of cysteine to tRNA(Cys).</text>
</comment>
<comment type="catalytic activity">
    <reaction evidence="3">
        <text>tRNA(Cys) + L-cysteine + ATP = L-cysteinyl-tRNA(Cys) + AMP + diphosphate</text>
        <dbReference type="Rhea" id="RHEA:17773"/>
        <dbReference type="Rhea" id="RHEA-COMP:9661"/>
        <dbReference type="Rhea" id="RHEA-COMP:9679"/>
        <dbReference type="ChEBI" id="CHEBI:30616"/>
        <dbReference type="ChEBI" id="CHEBI:33019"/>
        <dbReference type="ChEBI" id="CHEBI:35235"/>
        <dbReference type="ChEBI" id="CHEBI:78442"/>
        <dbReference type="ChEBI" id="CHEBI:78517"/>
        <dbReference type="ChEBI" id="CHEBI:456215"/>
        <dbReference type="EC" id="6.1.1.16"/>
    </reaction>
    <physiologicalReaction direction="left-to-right" evidence="3">
        <dbReference type="Rhea" id="RHEA:17774"/>
    </physiologicalReaction>
</comment>
<comment type="cofactor">
    <cofactor evidence="2">
        <name>Zn(2+)</name>
        <dbReference type="ChEBI" id="CHEBI:29105"/>
    </cofactor>
    <text evidence="2">Binds 1 zinc ion per subunit.</text>
</comment>
<comment type="subunit">
    <text evidence="3">Homodimer.</text>
</comment>
<comment type="subcellular location">
    <subcellularLocation>
        <location evidence="3">Cytoplasm</location>
    </subcellularLocation>
</comment>
<sequence length="748" mass="85452">MAGSSGQQGKGRRVQPQWSPPAGTQPCRLHLYNSLTRNKEVFIPQDGKKVTWYCCGPTVYDASHMGHARSYISFDILRRVLKDYFKFDVFYCMNITDIDDKIIKRARQNHLFEQYLEKRPEAAQLLEDVQAALKPFSVKLNETTDPDKKQMLERIQHEVQLATEPLEKAVQSRLTGEEVNSCVEVLLEEAKDLLSDWLDSTLGSDVTDNSIFSKLPKFWEGEFHRDMEALNVLPPDVLTRVSEYVPEIVNFVQKIVDNGYGYVSDGSVYFDTAKFASSEKHSYGKLVPEAVGDQKALQEGEGDLSISADRLSEKRSPNDFALWKASKPGEPSWPCPWGKGRPGWHIECSAMAGTLLGASMDIHGGGFDLRFPHHDNELAQSEAYFENDCWVRYFLHTGHLTITGCKMSKSLKNFITIKDALKKHSARQLRLAFLMHSWKDTLDYSSNTMESALQYEKFLNEFFLNVKDILRAPVDITGQFEKWGEEEAELNKNFYDKKTAIHEALCDNVDTRTVMEEMRALVSQCNLYMAARKAMRKRPNRALLENIALYLTHMLKIFGAIEEESSLGFPVGGSGTSLNLESTVMPYLQVLSEFREGVRKIAREQKVPEVLQLSDALRDDILPELGVRFEDPEGLPTVVKLVDRNTLLKEREEKRQVEEEKRKKKEEAARRKQEQEAAKLAKMKIPPSEMFLSETDKYSKFDENGLPTHDAEGKELSKGQAKKVKKLFEAQEKLYKEYLQMPQNGSFQ</sequence>
<protein>
    <recommendedName>
        <fullName>Cysteine--tRNA ligase, cytoplasmic</fullName>
        <ecNumber evidence="3">6.1.1.16</ecNumber>
    </recommendedName>
    <alternativeName>
        <fullName>Cysteinyl-tRNA synthetase</fullName>
        <shortName>CysRS</shortName>
    </alternativeName>
</protein>